<name>TRPB_AERS4</name>
<proteinExistence type="inferred from homology"/>
<reference key="1">
    <citation type="journal article" date="2008" name="BMC Genomics">
        <title>The genome of Aeromonas salmonicida subsp. salmonicida A449: insights into the evolution of a fish pathogen.</title>
        <authorList>
            <person name="Reith M.E."/>
            <person name="Singh R.K."/>
            <person name="Curtis B."/>
            <person name="Boyd J.M."/>
            <person name="Bouevitch A."/>
            <person name="Kimball J."/>
            <person name="Munholland J."/>
            <person name="Murphy C."/>
            <person name="Sarty D."/>
            <person name="Williams J."/>
            <person name="Nash J.H."/>
            <person name="Johnson S.C."/>
            <person name="Brown L.L."/>
        </authorList>
    </citation>
    <scope>NUCLEOTIDE SEQUENCE [LARGE SCALE GENOMIC DNA]</scope>
    <source>
        <strain>A449</strain>
    </source>
</reference>
<organism>
    <name type="scientific">Aeromonas salmonicida (strain A449)</name>
    <dbReference type="NCBI Taxonomy" id="382245"/>
    <lineage>
        <taxon>Bacteria</taxon>
        <taxon>Pseudomonadati</taxon>
        <taxon>Pseudomonadota</taxon>
        <taxon>Gammaproteobacteria</taxon>
        <taxon>Aeromonadales</taxon>
        <taxon>Aeromonadaceae</taxon>
        <taxon>Aeromonas</taxon>
    </lineage>
</organism>
<keyword id="KW-0028">Amino-acid biosynthesis</keyword>
<keyword id="KW-0057">Aromatic amino acid biosynthesis</keyword>
<keyword id="KW-0456">Lyase</keyword>
<keyword id="KW-0663">Pyridoxal phosphate</keyword>
<keyword id="KW-0822">Tryptophan biosynthesis</keyword>
<sequence length="397" mass="42876">MTLLNPFFGEFGGMYVPQILIPALLQLEKAFVDAQEDPAFIAEFQELLTEYAGRPTPLTLTRNLTKGTKTRLYLKREDLLHGGAHKTNQVLGQALLAKRMGKTEIIAETGAGQHGVATALACALLGLKCRVYMGAKDCERQKPNVFRMKLMGATVIPVHSGSSTLKDACNEALRDWAASYDNAHYLLGTAAGPHPFPTIVREFQKMIGEEAKAQCFKKEERLPDAVIACVGGGSNAIGMFADFIDNKEVRLIGVEPGGHGIESGEHGAPLGHGSKGVFFGMHSYLMQDKQGQIQESYSVSAGLDFPSVGPQHAHLASIGRAEYVSITDKEALDAFQELAKSEGIIPALESSHALAHALKMARSEPEKELVLIVNLSGRGDKDIFTVADIFEKEGTLS</sequence>
<accession>A4SKT1</accession>
<evidence type="ECO:0000255" key="1">
    <source>
        <dbReference type="HAMAP-Rule" id="MF_00133"/>
    </source>
</evidence>
<comment type="function">
    <text evidence="1">The beta subunit is responsible for the synthesis of L-tryptophan from indole and L-serine.</text>
</comment>
<comment type="catalytic activity">
    <reaction evidence="1">
        <text>(1S,2R)-1-C-(indol-3-yl)glycerol 3-phosphate + L-serine = D-glyceraldehyde 3-phosphate + L-tryptophan + H2O</text>
        <dbReference type="Rhea" id="RHEA:10532"/>
        <dbReference type="ChEBI" id="CHEBI:15377"/>
        <dbReference type="ChEBI" id="CHEBI:33384"/>
        <dbReference type="ChEBI" id="CHEBI:57912"/>
        <dbReference type="ChEBI" id="CHEBI:58866"/>
        <dbReference type="ChEBI" id="CHEBI:59776"/>
        <dbReference type="EC" id="4.2.1.20"/>
    </reaction>
</comment>
<comment type="cofactor">
    <cofactor evidence="1">
        <name>pyridoxal 5'-phosphate</name>
        <dbReference type="ChEBI" id="CHEBI:597326"/>
    </cofactor>
</comment>
<comment type="pathway">
    <text evidence="1">Amino-acid biosynthesis; L-tryptophan biosynthesis; L-tryptophan from chorismate: step 5/5.</text>
</comment>
<comment type="subunit">
    <text evidence="1">Tetramer of two alpha and two beta chains.</text>
</comment>
<comment type="similarity">
    <text evidence="1">Belongs to the TrpB family.</text>
</comment>
<gene>
    <name evidence="1" type="primary">trpB</name>
    <name type="ordered locus">ASA_1403</name>
</gene>
<dbReference type="EC" id="4.2.1.20" evidence="1"/>
<dbReference type="EMBL" id="CP000644">
    <property type="protein sequence ID" value="ABO89503.1"/>
    <property type="molecule type" value="Genomic_DNA"/>
</dbReference>
<dbReference type="RefSeq" id="WP_005319143.1">
    <property type="nucleotide sequence ID" value="NC_009348.1"/>
</dbReference>
<dbReference type="SMR" id="A4SKT1"/>
<dbReference type="STRING" id="29491.GCA_000820065_04079"/>
<dbReference type="KEGG" id="asa:ASA_1403"/>
<dbReference type="PATRIC" id="fig|382245.13.peg.1400"/>
<dbReference type="eggNOG" id="COG0133">
    <property type="taxonomic scope" value="Bacteria"/>
</dbReference>
<dbReference type="HOGENOM" id="CLU_016734_3_1_6"/>
<dbReference type="UniPathway" id="UPA00035">
    <property type="reaction ID" value="UER00044"/>
</dbReference>
<dbReference type="Proteomes" id="UP000000225">
    <property type="component" value="Chromosome"/>
</dbReference>
<dbReference type="GO" id="GO:0005737">
    <property type="term" value="C:cytoplasm"/>
    <property type="evidence" value="ECO:0007669"/>
    <property type="project" value="TreeGrafter"/>
</dbReference>
<dbReference type="GO" id="GO:0004834">
    <property type="term" value="F:tryptophan synthase activity"/>
    <property type="evidence" value="ECO:0007669"/>
    <property type="project" value="UniProtKB-UniRule"/>
</dbReference>
<dbReference type="CDD" id="cd06446">
    <property type="entry name" value="Trp-synth_B"/>
    <property type="match status" value="1"/>
</dbReference>
<dbReference type="FunFam" id="3.40.50.1100:FF:000001">
    <property type="entry name" value="Tryptophan synthase beta chain"/>
    <property type="match status" value="1"/>
</dbReference>
<dbReference type="FunFam" id="3.40.50.1100:FF:000004">
    <property type="entry name" value="Tryptophan synthase beta chain"/>
    <property type="match status" value="1"/>
</dbReference>
<dbReference type="Gene3D" id="3.40.50.1100">
    <property type="match status" value="2"/>
</dbReference>
<dbReference type="HAMAP" id="MF_00133">
    <property type="entry name" value="Trp_synth_beta"/>
    <property type="match status" value="1"/>
</dbReference>
<dbReference type="InterPro" id="IPR006653">
    <property type="entry name" value="Trp_synth_b_CS"/>
</dbReference>
<dbReference type="InterPro" id="IPR006654">
    <property type="entry name" value="Trp_synth_beta"/>
</dbReference>
<dbReference type="InterPro" id="IPR023026">
    <property type="entry name" value="Trp_synth_beta/beta-like"/>
</dbReference>
<dbReference type="InterPro" id="IPR001926">
    <property type="entry name" value="TrpB-like_PALP"/>
</dbReference>
<dbReference type="InterPro" id="IPR036052">
    <property type="entry name" value="TrpB-like_PALP_sf"/>
</dbReference>
<dbReference type="NCBIfam" id="TIGR00263">
    <property type="entry name" value="trpB"/>
    <property type="match status" value="1"/>
</dbReference>
<dbReference type="PANTHER" id="PTHR48077:SF3">
    <property type="entry name" value="TRYPTOPHAN SYNTHASE"/>
    <property type="match status" value="1"/>
</dbReference>
<dbReference type="PANTHER" id="PTHR48077">
    <property type="entry name" value="TRYPTOPHAN SYNTHASE-RELATED"/>
    <property type="match status" value="1"/>
</dbReference>
<dbReference type="Pfam" id="PF00291">
    <property type="entry name" value="PALP"/>
    <property type="match status" value="1"/>
</dbReference>
<dbReference type="PIRSF" id="PIRSF001413">
    <property type="entry name" value="Trp_syn_beta"/>
    <property type="match status" value="1"/>
</dbReference>
<dbReference type="SUPFAM" id="SSF53686">
    <property type="entry name" value="Tryptophan synthase beta subunit-like PLP-dependent enzymes"/>
    <property type="match status" value="1"/>
</dbReference>
<dbReference type="PROSITE" id="PS00168">
    <property type="entry name" value="TRP_SYNTHASE_BETA"/>
    <property type="match status" value="1"/>
</dbReference>
<feature type="chain" id="PRO_1000076379" description="Tryptophan synthase beta chain">
    <location>
        <begin position="1"/>
        <end position="397"/>
    </location>
</feature>
<feature type="modified residue" description="N6-(pyridoxal phosphate)lysine" evidence="1">
    <location>
        <position position="86"/>
    </location>
</feature>
<protein>
    <recommendedName>
        <fullName evidence="1">Tryptophan synthase beta chain</fullName>
        <ecNumber evidence="1">4.2.1.20</ecNumber>
    </recommendedName>
</protein>